<keyword id="KW-0012">Acyltransferase</keyword>
<keyword id="KW-0472">Membrane</keyword>
<keyword id="KW-0479">Metal-binding</keyword>
<keyword id="KW-0496">Mitochondrion</keyword>
<keyword id="KW-0999">Mitochondrion inner membrane</keyword>
<keyword id="KW-1185">Reference proteome</keyword>
<keyword id="KW-0808">Transferase</keyword>
<keyword id="KW-0809">Transit peptide</keyword>
<keyword id="KW-0819">tRNA processing</keyword>
<sequence length="480" mass="52996">MVRLFLTLSPAISRFNLYPGISILARNNNSLRLQKHHKLKTKTPTFSLISPSSSPNFQRTRFYSTETRISSLPYSENPNFDDNLVVLGIETSCDDTAAAVVRGNGEILSQVISSQAELLVQYGGVAPKQAEEAHSRVIDKVVQDALDKANLTEKDLSAVAVTIGPGLSLCLRVGVRKARRVAGNFSLPIVGVHHMEAHALVARLVEQELSFPFMALLISGGHNLLVLAHKLGQYTQLGTTVDDAIGEAFDKTAKWLGLDMHRSGGPAVEELALEGDAKSVKFNVPMKYHKDCNFSYAGLKTQVRLAIEAKEIDAKCPVSSATNEDRRNRADIAASFQRVAVLHLEEKCERAIDWALELEPSIKHMVISGGVASNKYVRLRLNNIVENKNLKLVCPPPSLCTDNGVMVAWTGLEHFRVGRYDPPPPATEPEDYVYDLRPRWPLGEEYAKGRSEARSMRTARIHPSLTSIIRADSLQQQTQT</sequence>
<evidence type="ECO:0000255" key="1">
    <source>
        <dbReference type="HAMAP-Rule" id="MF_03179"/>
    </source>
</evidence>
<evidence type="ECO:0000269" key="2">
    <source>
    </source>
</evidence>
<gene>
    <name evidence="1" type="primary">GCP1</name>
    <name type="ordered locus">At2g45270</name>
    <name type="ORF">F4L23.22</name>
</gene>
<protein>
    <recommendedName>
        <fullName evidence="1">Probable tRNA N6-adenosine threonylcarbamoyltransferase, mitochondrial</fullName>
        <ecNumber evidence="1">2.3.1.234</ecNumber>
    </recommendedName>
    <alternativeName>
        <fullName evidence="1">Glycoprotease 1</fullName>
    </alternativeName>
    <alternativeName>
        <fullName evidence="1">N6-L-threonylcarbamoyladenine synthase</fullName>
        <shortName evidence="1">t(6)A synthase</shortName>
    </alternativeName>
    <alternativeName>
        <fullName evidence="1">t(6)A37 threonylcarbamoyladenosine biosynthesis protein GCP1</fullName>
    </alternativeName>
    <alternativeName>
        <fullName evidence="1">tRNA threonylcarbamoyladenosine biosynthesis protein GCP1</fullName>
    </alternativeName>
</protein>
<dbReference type="EC" id="2.3.1.234" evidence="1"/>
<dbReference type="EMBL" id="AY024338">
    <property type="protein sequence ID" value="AAK00530.1"/>
    <property type="molecule type" value="mRNA"/>
</dbReference>
<dbReference type="EMBL" id="AC002387">
    <property type="protein sequence ID" value="AAB82636.2"/>
    <property type="molecule type" value="Genomic_DNA"/>
</dbReference>
<dbReference type="EMBL" id="CP002685">
    <property type="protein sequence ID" value="AEC10532.1"/>
    <property type="molecule type" value="Genomic_DNA"/>
</dbReference>
<dbReference type="EMBL" id="AY063864">
    <property type="protein sequence ID" value="AAL36220.1"/>
    <property type="molecule type" value="mRNA"/>
</dbReference>
<dbReference type="EMBL" id="AY117283">
    <property type="protein sequence ID" value="AAM51358.1"/>
    <property type="molecule type" value="mRNA"/>
</dbReference>
<dbReference type="PIR" id="E84888">
    <property type="entry name" value="E84888"/>
</dbReference>
<dbReference type="RefSeq" id="NP_566039.1">
    <property type="nucleotide sequence ID" value="NM_130090.5"/>
</dbReference>
<dbReference type="SMR" id="O22145"/>
<dbReference type="FunCoup" id="O22145">
    <property type="interactions" value="3949"/>
</dbReference>
<dbReference type="STRING" id="3702.O22145"/>
<dbReference type="GlyGen" id="O22145">
    <property type="glycosylation" value="1 site"/>
</dbReference>
<dbReference type="PaxDb" id="3702-AT2G45270.1"/>
<dbReference type="ProteomicsDB" id="248911"/>
<dbReference type="EnsemblPlants" id="AT2G45270.1">
    <property type="protein sequence ID" value="AT2G45270.1"/>
    <property type="gene ID" value="AT2G45270"/>
</dbReference>
<dbReference type="GeneID" id="819135"/>
<dbReference type="Gramene" id="AT2G45270.1">
    <property type="protein sequence ID" value="AT2G45270.1"/>
    <property type="gene ID" value="AT2G45270"/>
</dbReference>
<dbReference type="KEGG" id="ath:AT2G45270"/>
<dbReference type="Araport" id="AT2G45270"/>
<dbReference type="TAIR" id="AT2G45270">
    <property type="gene designation" value="GCP1"/>
</dbReference>
<dbReference type="eggNOG" id="KOG2707">
    <property type="taxonomic scope" value="Eukaryota"/>
</dbReference>
<dbReference type="HOGENOM" id="CLU_023208_1_1_1"/>
<dbReference type="InParanoid" id="O22145"/>
<dbReference type="OMA" id="NAAMIGC"/>
<dbReference type="PhylomeDB" id="O22145"/>
<dbReference type="BioCyc" id="ARA:AT2G45270-MONOMER"/>
<dbReference type="PRO" id="PR:O22145"/>
<dbReference type="Proteomes" id="UP000006548">
    <property type="component" value="Chromosome 2"/>
</dbReference>
<dbReference type="ExpressionAtlas" id="O22145">
    <property type="expression patterns" value="baseline and differential"/>
</dbReference>
<dbReference type="GO" id="GO:0005743">
    <property type="term" value="C:mitochondrial inner membrane"/>
    <property type="evidence" value="ECO:0000314"/>
    <property type="project" value="TAIR"/>
</dbReference>
<dbReference type="GO" id="GO:0046872">
    <property type="term" value="F:metal ion binding"/>
    <property type="evidence" value="ECO:0007669"/>
    <property type="project" value="UniProtKB-KW"/>
</dbReference>
<dbReference type="GO" id="GO:0061711">
    <property type="term" value="F:N(6)-L-threonylcarbamoyladenine synthase activity"/>
    <property type="evidence" value="ECO:0007669"/>
    <property type="project" value="UniProtKB-EC"/>
</dbReference>
<dbReference type="GO" id="GO:0009793">
    <property type="term" value="P:embryo development ending in seed dormancy"/>
    <property type="evidence" value="ECO:0000315"/>
    <property type="project" value="TAIR"/>
</dbReference>
<dbReference type="GO" id="GO:0002949">
    <property type="term" value="P:tRNA threonylcarbamoyladenosine modification"/>
    <property type="evidence" value="ECO:0007669"/>
    <property type="project" value="UniProtKB-UniRule"/>
</dbReference>
<dbReference type="CDD" id="cd24134">
    <property type="entry name" value="ASKHA_NBD_OSGEPL1_QRI7_euk"/>
    <property type="match status" value="1"/>
</dbReference>
<dbReference type="FunFam" id="3.30.420.40:FF:000083">
    <property type="entry name" value="Probable tRNA N6-adenosine threonylcarbamoyltransferase, mitochondrial"/>
    <property type="match status" value="1"/>
</dbReference>
<dbReference type="FunFam" id="3.30.420.40:FF:000133">
    <property type="entry name" value="Probable tRNA N6-adenosine threonylcarbamoyltransferase, mitochondrial"/>
    <property type="match status" value="1"/>
</dbReference>
<dbReference type="Gene3D" id="3.30.420.40">
    <property type="match status" value="2"/>
</dbReference>
<dbReference type="HAMAP" id="MF_01445">
    <property type="entry name" value="TsaD"/>
    <property type="match status" value="1"/>
</dbReference>
<dbReference type="InterPro" id="IPR043129">
    <property type="entry name" value="ATPase_NBD"/>
</dbReference>
<dbReference type="InterPro" id="IPR000905">
    <property type="entry name" value="Gcp-like_dom"/>
</dbReference>
<dbReference type="InterPro" id="IPR017861">
    <property type="entry name" value="KAE1/TsaD"/>
</dbReference>
<dbReference type="InterPro" id="IPR022450">
    <property type="entry name" value="TsaD"/>
</dbReference>
<dbReference type="NCBIfam" id="TIGR00329">
    <property type="entry name" value="gcp_kae1"/>
    <property type="match status" value="1"/>
</dbReference>
<dbReference type="NCBIfam" id="TIGR03723">
    <property type="entry name" value="T6A_TsaD_YgjD"/>
    <property type="match status" value="1"/>
</dbReference>
<dbReference type="PANTHER" id="PTHR11735">
    <property type="entry name" value="TRNA N6-ADENOSINE THREONYLCARBAMOYLTRANSFERASE"/>
    <property type="match status" value="1"/>
</dbReference>
<dbReference type="PANTHER" id="PTHR11735:SF6">
    <property type="entry name" value="TRNA N6-ADENOSINE THREONYLCARBAMOYLTRANSFERASE, MITOCHONDRIAL"/>
    <property type="match status" value="1"/>
</dbReference>
<dbReference type="Pfam" id="PF00814">
    <property type="entry name" value="TsaD"/>
    <property type="match status" value="1"/>
</dbReference>
<dbReference type="PRINTS" id="PR00789">
    <property type="entry name" value="OSIALOPTASE"/>
</dbReference>
<dbReference type="SUPFAM" id="SSF53067">
    <property type="entry name" value="Actin-like ATPase domain"/>
    <property type="match status" value="1"/>
</dbReference>
<organism>
    <name type="scientific">Arabidopsis thaliana</name>
    <name type="common">Mouse-ear cress</name>
    <dbReference type="NCBI Taxonomy" id="3702"/>
    <lineage>
        <taxon>Eukaryota</taxon>
        <taxon>Viridiplantae</taxon>
        <taxon>Streptophyta</taxon>
        <taxon>Embryophyta</taxon>
        <taxon>Tracheophyta</taxon>
        <taxon>Spermatophyta</taxon>
        <taxon>Magnoliopsida</taxon>
        <taxon>eudicotyledons</taxon>
        <taxon>Gunneridae</taxon>
        <taxon>Pentapetalae</taxon>
        <taxon>rosids</taxon>
        <taxon>malvids</taxon>
        <taxon>Brassicales</taxon>
        <taxon>Brassicaceae</taxon>
        <taxon>Camelineae</taxon>
        <taxon>Arabidopsis</taxon>
    </lineage>
</organism>
<proteinExistence type="evidence at transcript level"/>
<name>OSGP2_ARATH</name>
<feature type="transit peptide" description="Mitochondrion" evidence="1">
    <location>
        <begin position="1"/>
        <end position="86"/>
    </location>
</feature>
<feature type="chain" id="PRO_0000424536" description="Probable tRNA N6-adenosine threonylcarbamoyltransferase, mitochondrial">
    <location>
        <begin position="87"/>
        <end position="480"/>
    </location>
</feature>
<feature type="binding site" evidence="1">
    <location>
        <position position="194"/>
    </location>
    <ligand>
        <name>a divalent metal cation</name>
        <dbReference type="ChEBI" id="CHEBI:60240"/>
    </ligand>
</feature>
<feature type="binding site" evidence="1">
    <location>
        <position position="198"/>
    </location>
    <ligand>
        <name>a divalent metal cation</name>
        <dbReference type="ChEBI" id="CHEBI:60240"/>
    </ligand>
</feature>
<feature type="binding site" evidence="1">
    <location>
        <begin position="217"/>
        <end position="221"/>
    </location>
    <ligand>
        <name>substrate</name>
    </ligand>
</feature>
<feature type="binding site" evidence="1">
    <location>
        <position position="250"/>
    </location>
    <ligand>
        <name>substrate</name>
    </ligand>
</feature>
<feature type="binding site" evidence="1">
    <location>
        <position position="265"/>
    </location>
    <ligand>
        <name>substrate</name>
    </ligand>
</feature>
<feature type="binding site" evidence="1">
    <location>
        <position position="269"/>
    </location>
    <ligand>
        <name>substrate</name>
    </ligand>
</feature>
<feature type="binding site" evidence="1">
    <location>
        <begin position="373"/>
        <end position="374"/>
    </location>
    <ligand>
        <name>substrate</name>
    </ligand>
</feature>
<feature type="binding site" evidence="1">
    <location>
        <position position="401"/>
    </location>
    <ligand>
        <name>substrate</name>
    </ligand>
</feature>
<feature type="binding site" evidence="1">
    <location>
        <position position="402"/>
    </location>
    <ligand>
        <name>a divalent metal cation</name>
        <dbReference type="ChEBI" id="CHEBI:60240"/>
    </ligand>
</feature>
<reference key="1">
    <citation type="journal article" date="2009" name="Biochem. J.">
        <title>Eukaryotic GCP1 is a conserved mitochondrial protein required for progression of embryo development beyond the globular stage in Arabidopsis thaliana.</title>
        <authorList>
            <person name="Haussuehl K."/>
            <person name="Huesgen P.F."/>
            <person name="Meier M."/>
            <person name="Dessi P."/>
            <person name="Glaser E."/>
            <person name="Adamski J."/>
            <person name="Adamska I."/>
        </authorList>
    </citation>
    <scope>NUCLEOTIDE SEQUENCE [MRNA]</scope>
    <scope>SUBCELLULAR LOCATION</scope>
    <scope>DISRUPTION PHENOTYPE</scope>
    <scope>DEVELOPMENTAL STAGE</scope>
    <scope>TISSUE SPECIFICITY</scope>
    <source>
        <strain>cv. Columbia</strain>
    </source>
</reference>
<reference key="2">
    <citation type="journal article" date="1999" name="Nature">
        <title>Sequence and analysis of chromosome 2 of the plant Arabidopsis thaliana.</title>
        <authorList>
            <person name="Lin X."/>
            <person name="Kaul S."/>
            <person name="Rounsley S.D."/>
            <person name="Shea T.P."/>
            <person name="Benito M.-I."/>
            <person name="Town C.D."/>
            <person name="Fujii C.Y."/>
            <person name="Mason T.M."/>
            <person name="Bowman C.L."/>
            <person name="Barnstead M.E."/>
            <person name="Feldblyum T.V."/>
            <person name="Buell C.R."/>
            <person name="Ketchum K.A."/>
            <person name="Lee J.J."/>
            <person name="Ronning C.M."/>
            <person name="Koo H.L."/>
            <person name="Moffat K.S."/>
            <person name="Cronin L.A."/>
            <person name="Shen M."/>
            <person name="Pai G."/>
            <person name="Van Aken S."/>
            <person name="Umayam L."/>
            <person name="Tallon L.J."/>
            <person name="Gill J.E."/>
            <person name="Adams M.D."/>
            <person name="Carrera A.J."/>
            <person name="Creasy T.H."/>
            <person name="Goodman H.M."/>
            <person name="Somerville C.R."/>
            <person name="Copenhaver G.P."/>
            <person name="Preuss D."/>
            <person name="Nierman W.C."/>
            <person name="White O."/>
            <person name="Eisen J.A."/>
            <person name="Salzberg S.L."/>
            <person name="Fraser C.M."/>
            <person name="Venter J.C."/>
        </authorList>
    </citation>
    <scope>NUCLEOTIDE SEQUENCE [LARGE SCALE GENOMIC DNA]</scope>
    <source>
        <strain>cv. Columbia</strain>
    </source>
</reference>
<reference key="3">
    <citation type="journal article" date="2017" name="Plant J.">
        <title>Araport11: a complete reannotation of the Arabidopsis thaliana reference genome.</title>
        <authorList>
            <person name="Cheng C.Y."/>
            <person name="Krishnakumar V."/>
            <person name="Chan A.P."/>
            <person name="Thibaud-Nissen F."/>
            <person name="Schobel S."/>
            <person name="Town C.D."/>
        </authorList>
    </citation>
    <scope>GENOME REANNOTATION</scope>
    <source>
        <strain>cv. Columbia</strain>
    </source>
</reference>
<reference key="4">
    <citation type="journal article" date="2003" name="Science">
        <title>Empirical analysis of transcriptional activity in the Arabidopsis genome.</title>
        <authorList>
            <person name="Yamada K."/>
            <person name="Lim J."/>
            <person name="Dale J.M."/>
            <person name="Chen H."/>
            <person name="Shinn P."/>
            <person name="Palm C.J."/>
            <person name="Southwick A.M."/>
            <person name="Wu H.C."/>
            <person name="Kim C.J."/>
            <person name="Nguyen M."/>
            <person name="Pham P.K."/>
            <person name="Cheuk R.F."/>
            <person name="Karlin-Newmann G."/>
            <person name="Liu S.X."/>
            <person name="Lam B."/>
            <person name="Sakano H."/>
            <person name="Wu T."/>
            <person name="Yu G."/>
            <person name="Miranda M."/>
            <person name="Quach H.L."/>
            <person name="Tripp M."/>
            <person name="Chang C.H."/>
            <person name="Lee J.M."/>
            <person name="Toriumi M.J."/>
            <person name="Chan M.M."/>
            <person name="Tang C.C."/>
            <person name="Onodera C.S."/>
            <person name="Deng J.M."/>
            <person name="Akiyama K."/>
            <person name="Ansari Y."/>
            <person name="Arakawa T."/>
            <person name="Banh J."/>
            <person name="Banno F."/>
            <person name="Bowser L."/>
            <person name="Brooks S.Y."/>
            <person name="Carninci P."/>
            <person name="Chao Q."/>
            <person name="Choy N."/>
            <person name="Enju A."/>
            <person name="Goldsmith A.D."/>
            <person name="Gurjal M."/>
            <person name="Hansen N.F."/>
            <person name="Hayashizaki Y."/>
            <person name="Johnson-Hopson C."/>
            <person name="Hsuan V.W."/>
            <person name="Iida K."/>
            <person name="Karnes M."/>
            <person name="Khan S."/>
            <person name="Koesema E."/>
            <person name="Ishida J."/>
            <person name="Jiang P.X."/>
            <person name="Jones T."/>
            <person name="Kawai J."/>
            <person name="Kamiya A."/>
            <person name="Meyers C."/>
            <person name="Nakajima M."/>
            <person name="Narusaka M."/>
            <person name="Seki M."/>
            <person name="Sakurai T."/>
            <person name="Satou M."/>
            <person name="Tamse R."/>
            <person name="Vaysberg M."/>
            <person name="Wallender E.K."/>
            <person name="Wong C."/>
            <person name="Yamamura Y."/>
            <person name="Yuan S."/>
            <person name="Shinozaki K."/>
            <person name="Davis R.W."/>
            <person name="Theologis A."/>
            <person name="Ecker J.R."/>
        </authorList>
    </citation>
    <scope>NUCLEOTIDE SEQUENCE [LARGE SCALE MRNA]</scope>
    <source>
        <strain>cv. Columbia</strain>
    </source>
</reference>
<accession>O22145</accession>
<accession>Q8VWL2</accession>
<comment type="function">
    <text evidence="1">Required for the formation of a threonylcarbamoyl group on adenosine at position 37 (t(6)A37) in mitochondrial tRNAs that read codons beginning with adenine. Probably involved in the transfer of the threonylcarbamoyl moiety of threonylcarbamoyl-AMP (TC-AMP) to the N6 group of A37. Involved in mitochondrial genome maintenance (By similarity). May have a role in embryonic development in plants.</text>
</comment>
<comment type="catalytic activity">
    <reaction evidence="1">
        <text>L-threonylcarbamoyladenylate + adenosine(37) in tRNA = N(6)-L-threonylcarbamoyladenosine(37) in tRNA + AMP + H(+)</text>
        <dbReference type="Rhea" id="RHEA:37059"/>
        <dbReference type="Rhea" id="RHEA-COMP:10162"/>
        <dbReference type="Rhea" id="RHEA-COMP:10163"/>
        <dbReference type="ChEBI" id="CHEBI:15378"/>
        <dbReference type="ChEBI" id="CHEBI:73682"/>
        <dbReference type="ChEBI" id="CHEBI:74411"/>
        <dbReference type="ChEBI" id="CHEBI:74418"/>
        <dbReference type="ChEBI" id="CHEBI:456215"/>
        <dbReference type="EC" id="2.3.1.234"/>
    </reaction>
</comment>
<comment type="cofactor">
    <cofactor evidence="1">
        <name>a divalent metal cation</name>
        <dbReference type="ChEBI" id="CHEBI:60240"/>
    </cofactor>
    <text evidence="1">Binds 1 divalent metal cation per subunit.</text>
</comment>
<comment type="subunit">
    <text evidence="1">Homodimer.</text>
</comment>
<comment type="subcellular location">
    <subcellularLocation>
        <location evidence="1 2">Mitochondrion inner membrane</location>
        <topology evidence="2">Peripheral membrane protein</topology>
    </subcellularLocation>
</comment>
<comment type="tissue specificity">
    <text evidence="2">Expressed in young developing leaves, roots, flowers and siliques.</text>
</comment>
<comment type="developmental stage">
    <text evidence="2">Expressed transiently at the early stages of seedling development. Maximal expression is reached during week 3 after seed germination.</text>
</comment>
<comment type="disruption phenotype">
    <text evidence="2">Embryonic lethal.</text>
</comment>
<comment type="similarity">
    <text evidence="1">Belongs to the KAE1 / TsaD family.</text>
</comment>